<reference key="1">
    <citation type="journal article" date="2013" name="Proc. Natl. Acad. Sci. U.S.A.">
        <title>Polynucleobacter necessarius, a model for genome reduction in both free-living and symbiotic bacteria.</title>
        <authorList>
            <person name="Boscaro V."/>
            <person name="Felletti M."/>
            <person name="Vannini C."/>
            <person name="Ackerman M.S."/>
            <person name="Chain P.S."/>
            <person name="Malfatti S."/>
            <person name="Vergez L.M."/>
            <person name="Shin M."/>
            <person name="Doak T.G."/>
            <person name="Lynch M."/>
            <person name="Petroni G."/>
        </authorList>
    </citation>
    <scope>NUCLEOTIDE SEQUENCE [LARGE SCALE GENOMIC DNA]</scope>
    <source>
        <strain>STIR1</strain>
    </source>
</reference>
<sequence length="122" mass="13178">MIQTESRLQVADNTGASEVLCIKVLGGSERRYASIGDVIKVSVKSAAPRGRVKKGDIYNAVVVRTAKGVRRPDGSLIKFDGNAAVLLNAKLEPIGTRIFGPVTRELRTEKFMKIVSLAPEVI</sequence>
<organism>
    <name type="scientific">Polynucleobacter necessarius subsp. necessarius (strain STIR1)</name>
    <dbReference type="NCBI Taxonomy" id="452638"/>
    <lineage>
        <taxon>Bacteria</taxon>
        <taxon>Pseudomonadati</taxon>
        <taxon>Pseudomonadota</taxon>
        <taxon>Betaproteobacteria</taxon>
        <taxon>Burkholderiales</taxon>
        <taxon>Burkholderiaceae</taxon>
        <taxon>Polynucleobacter</taxon>
    </lineage>
</organism>
<name>RL14_POLNS</name>
<proteinExistence type="inferred from homology"/>
<evidence type="ECO:0000255" key="1">
    <source>
        <dbReference type="HAMAP-Rule" id="MF_01367"/>
    </source>
</evidence>
<evidence type="ECO:0000305" key="2"/>
<feature type="chain" id="PRO_1000144309" description="Large ribosomal subunit protein uL14">
    <location>
        <begin position="1"/>
        <end position="122"/>
    </location>
</feature>
<comment type="function">
    <text evidence="1">Binds to 23S rRNA. Forms part of two intersubunit bridges in the 70S ribosome.</text>
</comment>
<comment type="subunit">
    <text evidence="1">Part of the 50S ribosomal subunit. Forms a cluster with proteins L3 and L19. In the 70S ribosome, L14 and L19 interact and together make contacts with the 16S rRNA in bridges B5 and B8.</text>
</comment>
<comment type="similarity">
    <text evidence="1">Belongs to the universal ribosomal protein uL14 family.</text>
</comment>
<dbReference type="EMBL" id="CP001010">
    <property type="protein sequence ID" value="ACB43388.1"/>
    <property type="molecule type" value="Genomic_DNA"/>
</dbReference>
<dbReference type="SMR" id="B1XSR1"/>
<dbReference type="STRING" id="452638.Pnec_0060"/>
<dbReference type="KEGG" id="pne:Pnec_0060"/>
<dbReference type="eggNOG" id="COG0093">
    <property type="taxonomic scope" value="Bacteria"/>
</dbReference>
<dbReference type="HOGENOM" id="CLU_095071_2_1_4"/>
<dbReference type="OrthoDB" id="9806379at2"/>
<dbReference type="GO" id="GO:0022625">
    <property type="term" value="C:cytosolic large ribosomal subunit"/>
    <property type="evidence" value="ECO:0007669"/>
    <property type="project" value="TreeGrafter"/>
</dbReference>
<dbReference type="GO" id="GO:0070180">
    <property type="term" value="F:large ribosomal subunit rRNA binding"/>
    <property type="evidence" value="ECO:0007669"/>
    <property type="project" value="TreeGrafter"/>
</dbReference>
<dbReference type="GO" id="GO:0003735">
    <property type="term" value="F:structural constituent of ribosome"/>
    <property type="evidence" value="ECO:0007669"/>
    <property type="project" value="InterPro"/>
</dbReference>
<dbReference type="GO" id="GO:0006412">
    <property type="term" value="P:translation"/>
    <property type="evidence" value="ECO:0007669"/>
    <property type="project" value="UniProtKB-UniRule"/>
</dbReference>
<dbReference type="CDD" id="cd00337">
    <property type="entry name" value="Ribosomal_uL14"/>
    <property type="match status" value="1"/>
</dbReference>
<dbReference type="FunFam" id="2.40.150.20:FF:000001">
    <property type="entry name" value="50S ribosomal protein L14"/>
    <property type="match status" value="1"/>
</dbReference>
<dbReference type="Gene3D" id="2.40.150.20">
    <property type="entry name" value="Ribosomal protein L14"/>
    <property type="match status" value="1"/>
</dbReference>
<dbReference type="HAMAP" id="MF_01367">
    <property type="entry name" value="Ribosomal_uL14"/>
    <property type="match status" value="1"/>
</dbReference>
<dbReference type="InterPro" id="IPR000218">
    <property type="entry name" value="Ribosomal_uL14"/>
</dbReference>
<dbReference type="InterPro" id="IPR005745">
    <property type="entry name" value="Ribosomal_uL14_bac-type"/>
</dbReference>
<dbReference type="InterPro" id="IPR019972">
    <property type="entry name" value="Ribosomal_uL14_CS"/>
</dbReference>
<dbReference type="InterPro" id="IPR036853">
    <property type="entry name" value="Ribosomal_uL14_sf"/>
</dbReference>
<dbReference type="NCBIfam" id="TIGR01067">
    <property type="entry name" value="rplN_bact"/>
    <property type="match status" value="1"/>
</dbReference>
<dbReference type="PANTHER" id="PTHR11761">
    <property type="entry name" value="50S/60S RIBOSOMAL PROTEIN L14/L23"/>
    <property type="match status" value="1"/>
</dbReference>
<dbReference type="PANTHER" id="PTHR11761:SF3">
    <property type="entry name" value="LARGE RIBOSOMAL SUBUNIT PROTEIN UL14M"/>
    <property type="match status" value="1"/>
</dbReference>
<dbReference type="Pfam" id="PF00238">
    <property type="entry name" value="Ribosomal_L14"/>
    <property type="match status" value="1"/>
</dbReference>
<dbReference type="SMART" id="SM01374">
    <property type="entry name" value="Ribosomal_L14"/>
    <property type="match status" value="1"/>
</dbReference>
<dbReference type="SUPFAM" id="SSF50193">
    <property type="entry name" value="Ribosomal protein L14"/>
    <property type="match status" value="1"/>
</dbReference>
<dbReference type="PROSITE" id="PS00049">
    <property type="entry name" value="RIBOSOMAL_L14"/>
    <property type="match status" value="1"/>
</dbReference>
<gene>
    <name evidence="1" type="primary">rplN</name>
    <name type="ordered locus">Pnec_0060</name>
</gene>
<accession>B1XSR1</accession>
<keyword id="KW-0687">Ribonucleoprotein</keyword>
<keyword id="KW-0689">Ribosomal protein</keyword>
<keyword id="KW-0694">RNA-binding</keyword>
<keyword id="KW-0699">rRNA-binding</keyword>
<protein>
    <recommendedName>
        <fullName evidence="1">Large ribosomal subunit protein uL14</fullName>
    </recommendedName>
    <alternativeName>
        <fullName evidence="2">50S ribosomal protein L14</fullName>
    </alternativeName>
</protein>